<sequence length="525" mass="58422">MTKNIHKHRILILDFGSQYTQLLARRVREIGVYCELWAWDVTEAQIREFNPSGIILSGSPESTIENGSPRAPDYVFTAGVPVLGVCYGMQTMAIQLGGKVESSNQREFGYAQVEIKADSALIRDIKDAINPAGEAVLDVWMSHGDKVAEIPADFVTVASTDTCPFAIMANEEKRFYGVQFHPEVTHTKQGLRLLERFVLGICGCEALWTSATIIEDAIVRLREQIGDDHVILGLSGGVDSSVTAMLLHRAIGKRLTCVFVDNGLLRLNEADQVLEMFGDKFGLNIVHVAAEDRFLSALTGVDEPEAKRKIIGRVFVELFDEEACKQEQVKWLAQGTIYPDVIESAASATGKAHVIKSHHNVGGLPKEMKLGLVEPLKELFKDEVRKIGLELGLPYDMLYRHPFPGPGLGVRVLGEVKKEYCDLLRRADAIFIEELHKADLYNKVSQAFTVFLPVRSVGVMGDGRKYDWVVSLRAVETVDFMTAHWAHLPYDFLGRVSNRIINEVNGISRVVYDISGKPPATIEWE</sequence>
<reference key="1">
    <citation type="journal article" date="2001" name="Nature">
        <title>Genome sequence of Yersinia pestis, the causative agent of plague.</title>
        <authorList>
            <person name="Parkhill J."/>
            <person name="Wren B.W."/>
            <person name="Thomson N.R."/>
            <person name="Titball R.W."/>
            <person name="Holden M.T.G."/>
            <person name="Prentice M.B."/>
            <person name="Sebaihia M."/>
            <person name="James K.D."/>
            <person name="Churcher C.M."/>
            <person name="Mungall K.L."/>
            <person name="Baker S."/>
            <person name="Basham D."/>
            <person name="Bentley S.D."/>
            <person name="Brooks K."/>
            <person name="Cerdeno-Tarraga A.-M."/>
            <person name="Chillingworth T."/>
            <person name="Cronin A."/>
            <person name="Davies R.M."/>
            <person name="Davis P."/>
            <person name="Dougan G."/>
            <person name="Feltwell T."/>
            <person name="Hamlin N."/>
            <person name="Holroyd S."/>
            <person name="Jagels K."/>
            <person name="Karlyshev A.V."/>
            <person name="Leather S."/>
            <person name="Moule S."/>
            <person name="Oyston P.C.F."/>
            <person name="Quail M.A."/>
            <person name="Rutherford K.M."/>
            <person name="Simmonds M."/>
            <person name="Skelton J."/>
            <person name="Stevens K."/>
            <person name="Whitehead S."/>
            <person name="Barrell B.G."/>
        </authorList>
    </citation>
    <scope>NUCLEOTIDE SEQUENCE [LARGE SCALE GENOMIC DNA]</scope>
    <source>
        <strain>CO-92 / Biovar Orientalis</strain>
    </source>
</reference>
<reference key="2">
    <citation type="journal article" date="2002" name="J. Bacteriol.">
        <title>Genome sequence of Yersinia pestis KIM.</title>
        <authorList>
            <person name="Deng W."/>
            <person name="Burland V."/>
            <person name="Plunkett G. III"/>
            <person name="Boutin A."/>
            <person name="Mayhew G.F."/>
            <person name="Liss P."/>
            <person name="Perna N.T."/>
            <person name="Rose D.J."/>
            <person name="Mau B."/>
            <person name="Zhou S."/>
            <person name="Schwartz D.C."/>
            <person name="Fetherston J.D."/>
            <person name="Lindler L.E."/>
            <person name="Brubaker R.R."/>
            <person name="Plano G.V."/>
            <person name="Straley S.C."/>
            <person name="McDonough K.A."/>
            <person name="Nilles M.L."/>
            <person name="Matson J.S."/>
            <person name="Blattner F.R."/>
            <person name="Perry R.D."/>
        </authorList>
    </citation>
    <scope>NUCLEOTIDE SEQUENCE [LARGE SCALE GENOMIC DNA]</scope>
    <source>
        <strain>KIM10+ / Biovar Mediaevalis</strain>
    </source>
</reference>
<reference key="3">
    <citation type="journal article" date="2004" name="DNA Res.">
        <title>Complete genome sequence of Yersinia pestis strain 91001, an isolate avirulent to humans.</title>
        <authorList>
            <person name="Song Y."/>
            <person name="Tong Z."/>
            <person name="Wang J."/>
            <person name="Wang L."/>
            <person name="Guo Z."/>
            <person name="Han Y."/>
            <person name="Zhang J."/>
            <person name="Pei D."/>
            <person name="Zhou D."/>
            <person name="Qin H."/>
            <person name="Pang X."/>
            <person name="Han Y."/>
            <person name="Zhai J."/>
            <person name="Li M."/>
            <person name="Cui B."/>
            <person name="Qi Z."/>
            <person name="Jin L."/>
            <person name="Dai R."/>
            <person name="Chen F."/>
            <person name="Li S."/>
            <person name="Ye C."/>
            <person name="Du Z."/>
            <person name="Lin W."/>
            <person name="Wang J."/>
            <person name="Yu J."/>
            <person name="Yang H."/>
            <person name="Wang J."/>
            <person name="Huang P."/>
            <person name="Yang R."/>
        </authorList>
    </citation>
    <scope>NUCLEOTIDE SEQUENCE [LARGE SCALE GENOMIC DNA]</scope>
    <source>
        <strain>91001 / Biovar Mediaevalis</strain>
    </source>
</reference>
<evidence type="ECO:0000255" key="1">
    <source>
        <dbReference type="HAMAP-Rule" id="MF_00344"/>
    </source>
</evidence>
<comment type="function">
    <text evidence="1">Catalyzes the synthesis of GMP from XMP.</text>
</comment>
<comment type="catalytic activity">
    <reaction evidence="1">
        <text>XMP + L-glutamine + ATP + H2O = GMP + L-glutamate + AMP + diphosphate + 2 H(+)</text>
        <dbReference type="Rhea" id="RHEA:11680"/>
        <dbReference type="ChEBI" id="CHEBI:15377"/>
        <dbReference type="ChEBI" id="CHEBI:15378"/>
        <dbReference type="ChEBI" id="CHEBI:29985"/>
        <dbReference type="ChEBI" id="CHEBI:30616"/>
        <dbReference type="ChEBI" id="CHEBI:33019"/>
        <dbReference type="ChEBI" id="CHEBI:57464"/>
        <dbReference type="ChEBI" id="CHEBI:58115"/>
        <dbReference type="ChEBI" id="CHEBI:58359"/>
        <dbReference type="ChEBI" id="CHEBI:456215"/>
        <dbReference type="EC" id="6.3.5.2"/>
    </reaction>
</comment>
<comment type="pathway">
    <text evidence="1">Purine metabolism; GMP biosynthesis; GMP from XMP (L-Gln route): step 1/1.</text>
</comment>
<comment type="subunit">
    <text evidence="1">Homodimer.</text>
</comment>
<feature type="chain" id="PRO_0000140214" description="GMP synthase [glutamine-hydrolyzing]">
    <location>
        <begin position="1"/>
        <end position="525"/>
    </location>
</feature>
<feature type="domain" description="Glutamine amidotransferase type-1" evidence="1">
    <location>
        <begin position="9"/>
        <end position="207"/>
    </location>
</feature>
<feature type="domain" description="GMPS ATP-PPase" evidence="1">
    <location>
        <begin position="208"/>
        <end position="400"/>
    </location>
</feature>
<feature type="active site" description="Nucleophile" evidence="1">
    <location>
        <position position="86"/>
    </location>
</feature>
<feature type="active site" evidence="1">
    <location>
        <position position="181"/>
    </location>
</feature>
<feature type="active site" evidence="1">
    <location>
        <position position="183"/>
    </location>
</feature>
<feature type="binding site" evidence="1">
    <location>
        <begin position="235"/>
        <end position="241"/>
    </location>
    <ligand>
        <name>ATP</name>
        <dbReference type="ChEBI" id="CHEBI:30616"/>
    </ligand>
</feature>
<organism>
    <name type="scientific">Yersinia pestis</name>
    <dbReference type="NCBI Taxonomy" id="632"/>
    <lineage>
        <taxon>Bacteria</taxon>
        <taxon>Pseudomonadati</taxon>
        <taxon>Pseudomonadota</taxon>
        <taxon>Gammaproteobacteria</taxon>
        <taxon>Enterobacterales</taxon>
        <taxon>Yersiniaceae</taxon>
        <taxon>Yersinia</taxon>
    </lineage>
</organism>
<dbReference type="EC" id="6.3.5.2" evidence="1"/>
<dbReference type="EMBL" id="AL590842">
    <property type="protein sequence ID" value="CAL21481.1"/>
    <property type="molecule type" value="Genomic_DNA"/>
</dbReference>
<dbReference type="EMBL" id="AE009952">
    <property type="protein sequence ID" value="AAM84936.1"/>
    <property type="molecule type" value="Genomic_DNA"/>
</dbReference>
<dbReference type="EMBL" id="AE017042">
    <property type="protein sequence ID" value="AAS62924.1"/>
    <property type="molecule type" value="Genomic_DNA"/>
</dbReference>
<dbReference type="PIR" id="AF0349">
    <property type="entry name" value="AF0349"/>
</dbReference>
<dbReference type="RefSeq" id="WP_002209807.1">
    <property type="nucleotide sequence ID" value="NZ_WUCM01000067.1"/>
</dbReference>
<dbReference type="RefSeq" id="YP_002347805.1">
    <property type="nucleotide sequence ID" value="NC_003143.1"/>
</dbReference>
<dbReference type="SMR" id="Q8ZCU4"/>
<dbReference type="STRING" id="214092.YPO2870"/>
<dbReference type="MEROPS" id="C26.957"/>
<dbReference type="PaxDb" id="214092-YPO2870"/>
<dbReference type="EnsemblBacteria" id="AAS62924">
    <property type="protein sequence ID" value="AAS62924"/>
    <property type="gene ID" value="YP_2736"/>
</dbReference>
<dbReference type="GeneID" id="57975827"/>
<dbReference type="KEGG" id="ype:YPO2870"/>
<dbReference type="KEGG" id="ypk:y1363"/>
<dbReference type="KEGG" id="ypm:YP_2736"/>
<dbReference type="PATRIC" id="fig|214092.21.peg.3315"/>
<dbReference type="eggNOG" id="COG0518">
    <property type="taxonomic scope" value="Bacteria"/>
</dbReference>
<dbReference type="eggNOG" id="COG0519">
    <property type="taxonomic scope" value="Bacteria"/>
</dbReference>
<dbReference type="HOGENOM" id="CLU_014340_0_5_6"/>
<dbReference type="OMA" id="IWQSFAV"/>
<dbReference type="OrthoDB" id="9802219at2"/>
<dbReference type="UniPathway" id="UPA00189">
    <property type="reaction ID" value="UER00296"/>
</dbReference>
<dbReference type="Proteomes" id="UP000000815">
    <property type="component" value="Chromosome"/>
</dbReference>
<dbReference type="Proteomes" id="UP000001019">
    <property type="component" value="Chromosome"/>
</dbReference>
<dbReference type="Proteomes" id="UP000002490">
    <property type="component" value="Chromosome"/>
</dbReference>
<dbReference type="GO" id="GO:0005829">
    <property type="term" value="C:cytosol"/>
    <property type="evidence" value="ECO:0000318"/>
    <property type="project" value="GO_Central"/>
</dbReference>
<dbReference type="GO" id="GO:0005524">
    <property type="term" value="F:ATP binding"/>
    <property type="evidence" value="ECO:0007669"/>
    <property type="project" value="UniProtKB-UniRule"/>
</dbReference>
<dbReference type="GO" id="GO:0003921">
    <property type="term" value="F:GMP synthase activity"/>
    <property type="evidence" value="ECO:0000318"/>
    <property type="project" value="GO_Central"/>
</dbReference>
<dbReference type="GO" id="GO:0006177">
    <property type="term" value="P:GMP biosynthetic process"/>
    <property type="evidence" value="ECO:0000318"/>
    <property type="project" value="GO_Central"/>
</dbReference>
<dbReference type="CDD" id="cd01742">
    <property type="entry name" value="GATase1_GMP_Synthase"/>
    <property type="match status" value="1"/>
</dbReference>
<dbReference type="CDD" id="cd01997">
    <property type="entry name" value="GMP_synthase_C"/>
    <property type="match status" value="1"/>
</dbReference>
<dbReference type="FunFam" id="3.30.300.10:FF:000002">
    <property type="entry name" value="GMP synthase [glutamine-hydrolyzing]"/>
    <property type="match status" value="1"/>
</dbReference>
<dbReference type="FunFam" id="3.40.50.620:FF:000001">
    <property type="entry name" value="GMP synthase [glutamine-hydrolyzing]"/>
    <property type="match status" value="1"/>
</dbReference>
<dbReference type="FunFam" id="3.40.50.880:FF:000001">
    <property type="entry name" value="GMP synthase [glutamine-hydrolyzing]"/>
    <property type="match status" value="1"/>
</dbReference>
<dbReference type="Gene3D" id="3.30.300.10">
    <property type="match status" value="1"/>
</dbReference>
<dbReference type="Gene3D" id="3.40.50.880">
    <property type="match status" value="1"/>
</dbReference>
<dbReference type="Gene3D" id="3.40.50.620">
    <property type="entry name" value="HUPs"/>
    <property type="match status" value="1"/>
</dbReference>
<dbReference type="HAMAP" id="MF_00344">
    <property type="entry name" value="GMP_synthase"/>
    <property type="match status" value="1"/>
</dbReference>
<dbReference type="InterPro" id="IPR029062">
    <property type="entry name" value="Class_I_gatase-like"/>
</dbReference>
<dbReference type="InterPro" id="IPR017926">
    <property type="entry name" value="GATASE"/>
</dbReference>
<dbReference type="InterPro" id="IPR001674">
    <property type="entry name" value="GMP_synth_C"/>
</dbReference>
<dbReference type="InterPro" id="IPR004739">
    <property type="entry name" value="GMP_synth_GATase"/>
</dbReference>
<dbReference type="InterPro" id="IPR022955">
    <property type="entry name" value="GMP_synthase"/>
</dbReference>
<dbReference type="InterPro" id="IPR025777">
    <property type="entry name" value="GMPS_ATP_PPase_dom"/>
</dbReference>
<dbReference type="InterPro" id="IPR022310">
    <property type="entry name" value="NAD/GMP_synthase"/>
</dbReference>
<dbReference type="InterPro" id="IPR014729">
    <property type="entry name" value="Rossmann-like_a/b/a_fold"/>
</dbReference>
<dbReference type="NCBIfam" id="TIGR00884">
    <property type="entry name" value="guaA_Cterm"/>
    <property type="match status" value="1"/>
</dbReference>
<dbReference type="NCBIfam" id="TIGR00888">
    <property type="entry name" value="guaA_Nterm"/>
    <property type="match status" value="1"/>
</dbReference>
<dbReference type="NCBIfam" id="NF000848">
    <property type="entry name" value="PRK00074.1"/>
    <property type="match status" value="1"/>
</dbReference>
<dbReference type="PANTHER" id="PTHR11922:SF2">
    <property type="entry name" value="GMP SYNTHASE [GLUTAMINE-HYDROLYZING]"/>
    <property type="match status" value="1"/>
</dbReference>
<dbReference type="PANTHER" id="PTHR11922">
    <property type="entry name" value="GMP SYNTHASE-RELATED"/>
    <property type="match status" value="1"/>
</dbReference>
<dbReference type="Pfam" id="PF00117">
    <property type="entry name" value="GATase"/>
    <property type="match status" value="1"/>
</dbReference>
<dbReference type="Pfam" id="PF00958">
    <property type="entry name" value="GMP_synt_C"/>
    <property type="match status" value="1"/>
</dbReference>
<dbReference type="Pfam" id="PF02540">
    <property type="entry name" value="NAD_synthase"/>
    <property type="match status" value="1"/>
</dbReference>
<dbReference type="PRINTS" id="PR00097">
    <property type="entry name" value="ANTSNTHASEII"/>
</dbReference>
<dbReference type="PRINTS" id="PR00096">
    <property type="entry name" value="GATASE"/>
</dbReference>
<dbReference type="SUPFAM" id="SSF52402">
    <property type="entry name" value="Adenine nucleotide alpha hydrolases-like"/>
    <property type="match status" value="1"/>
</dbReference>
<dbReference type="SUPFAM" id="SSF52317">
    <property type="entry name" value="Class I glutamine amidotransferase-like"/>
    <property type="match status" value="1"/>
</dbReference>
<dbReference type="SUPFAM" id="SSF54810">
    <property type="entry name" value="GMP synthetase C-terminal dimerisation domain"/>
    <property type="match status" value="1"/>
</dbReference>
<dbReference type="PROSITE" id="PS51273">
    <property type="entry name" value="GATASE_TYPE_1"/>
    <property type="match status" value="1"/>
</dbReference>
<dbReference type="PROSITE" id="PS51553">
    <property type="entry name" value="GMPS_ATP_PPASE"/>
    <property type="match status" value="1"/>
</dbReference>
<protein>
    <recommendedName>
        <fullName evidence="1">GMP synthase [glutamine-hydrolyzing]</fullName>
        <ecNumber evidence="1">6.3.5.2</ecNumber>
    </recommendedName>
    <alternativeName>
        <fullName evidence="1">GMP synthetase</fullName>
    </alternativeName>
    <alternativeName>
        <fullName evidence="1">Glutamine amidotransferase</fullName>
    </alternativeName>
</protein>
<keyword id="KW-0067">ATP-binding</keyword>
<keyword id="KW-0315">Glutamine amidotransferase</keyword>
<keyword id="KW-0332">GMP biosynthesis</keyword>
<keyword id="KW-0436">Ligase</keyword>
<keyword id="KW-0547">Nucleotide-binding</keyword>
<keyword id="KW-0658">Purine biosynthesis</keyword>
<keyword id="KW-1185">Reference proteome</keyword>
<name>GUAA_YERPE</name>
<gene>
    <name evidence="1" type="primary">guaA</name>
    <name type="ordered locus">YPO2870</name>
    <name type="ordered locus">y1363</name>
    <name type="ordered locus">YP_2736</name>
</gene>
<accession>Q8ZCU4</accession>
<accession>Q0WD33</accession>
<proteinExistence type="inferred from homology"/>